<sequence>MALFRKLFYRKPPDGLLEICDRVFVFDCCFSTDSWEEENYKVYMAGVVNQLQEHFPEASSLVFNFREVGTRSVMADVLSEHGLTIMDYPRHYEGCSLLPVEVMHHFLRSSESWLSLGPNNLLLMHCESGAWPVLAFMLAALLIYRKQYSGESKTLDMIYKQAPRELLRLFSPLNPIPSQLRYLQYVSRRNLVSEWPPLDRALTMDCVILRFIPDVSGQGGFRPMFRIYGQDPFFVDDKKPKLLYTTPKKGKHLRVYKQAECELVKIDINCHVQGDIVIECLSLNDDMEREVMMFRVVFNTAFIRSNILMLNRDEVDTLWHIKEFPKGFRVELLFSDMDAASSVDLMNFSSLEEKDGLPIEVFSKVHEFFNQVDWVDQTDATRNMFQQLAIANAVQEGLDGNSSPRLQGLSPKSIHDIMKHAAIENSAKFKLSSMSEVETIDTPEKPPTDSVKKFIAEDVHSVLQINNQEQNASEDATKLLHQESPSLKLVHHSATVKPLVDDSKSPENAEENFPKSPSAHDGKAISFSPPTPSPPHPVRPQLAQAGAPPPPPPLPAAASKPSEQLQHSVVQATEPLSQGNSWMSLAGSTFQTVPNEKNLITLPPTPPLASTSHASPEPSSKTTNSLLLSPQASPATPTNPSKTVSVDFFGAATSPHLGASDNVASNLGQPARSPPPISNSDKKPALPRPPPPPPPPPMQHSTVTKVPPPPPPAPPAPPTPIVHTSSPPPPPPPPPPPAPPTPQSNGISAMKSSPPAPPAPPRLPTHSASPPPPTAPPPPPLGQTRAPSAPPPPPPKLGTKLSPSGPNVPPTPALPTGPLSSGKGRMLRVNLKNSPAKKLKPYHWLKLTRAVNGSLWAETQMSSEASKAPDIDMTELESLFSASAPEQAGKSRLDSSRGPKPEKVQLIEHRRAYNCEIMLSKVKVPLQDLTNSVLNLEESALDADQVENLIKFCPTREEMELLKGYTGDKDKLGKCELFFLEMMKVPRVETKLRVFSFKMQFTSQISELRNSLGVVNSAAEQVKNSEKFKRIMQTILSLGNALNQGTARGAAVGFKLDSLPKLSETRARNNRMTLMHYLCKILAEKIPEVLDFTKELSSLEPATKIQLKFLAEEMQAINKGLEKVVQELSLSENDGPISHNFNKILKEFLHYAEAEVRSLASLYSGVGRNVDGLILYFGEDPAKCPFEQVVSTLLNFVRLFNRAHEENGKQLEAEAKKNAAEKEKPKTGGLDTEIKKPLNEEVKEEKTKTSGLGKEMSDRLKERTAP</sequence>
<organism>
    <name type="scientific">Arabidopsis thaliana</name>
    <name type="common">Mouse-ear cress</name>
    <dbReference type="NCBI Taxonomy" id="3702"/>
    <lineage>
        <taxon>Eukaryota</taxon>
        <taxon>Viridiplantae</taxon>
        <taxon>Streptophyta</taxon>
        <taxon>Embryophyta</taxon>
        <taxon>Tracheophyta</taxon>
        <taxon>Spermatophyta</taxon>
        <taxon>Magnoliopsida</taxon>
        <taxon>eudicotyledons</taxon>
        <taxon>Gunneridae</taxon>
        <taxon>Pentapetalae</taxon>
        <taxon>rosids</taxon>
        <taxon>malvids</taxon>
        <taxon>Brassicales</taxon>
        <taxon>Brassicaceae</taxon>
        <taxon>Camelineae</taxon>
        <taxon>Arabidopsis</taxon>
    </lineage>
</organism>
<keyword id="KW-0378">Hydrolase</keyword>
<keyword id="KW-0904">Protein phosphatase</keyword>
<keyword id="KW-1185">Reference proteome</keyword>
<proteinExistence type="evidence at transcript level"/>
<evidence type="ECO:0000255" key="1">
    <source>
        <dbReference type="PROSITE-ProRule" id="PRU00589"/>
    </source>
</evidence>
<evidence type="ECO:0000255" key="2">
    <source>
        <dbReference type="PROSITE-ProRule" id="PRU00590"/>
    </source>
</evidence>
<evidence type="ECO:0000255" key="3">
    <source>
        <dbReference type="PROSITE-ProRule" id="PRU00774"/>
    </source>
</evidence>
<evidence type="ECO:0000256" key="4">
    <source>
        <dbReference type="SAM" id="MobiDB-lite"/>
    </source>
</evidence>
<evidence type="ECO:0000305" key="5"/>
<feature type="chain" id="PRO_0000308538" description="Formin-like protein 13">
    <location>
        <begin position="1"/>
        <end position="1266"/>
    </location>
</feature>
<feature type="domain" description="Phosphatase tensin-type" evidence="2">
    <location>
        <begin position="9"/>
        <end position="193"/>
    </location>
</feature>
<feature type="domain" description="C2 tensin-type" evidence="1">
    <location>
        <begin position="199"/>
        <end position="337"/>
    </location>
</feature>
<feature type="domain" description="FH2" evidence="3">
    <location>
        <begin position="829"/>
        <end position="1226"/>
    </location>
</feature>
<feature type="region of interest" description="Disordered" evidence="4">
    <location>
        <begin position="497"/>
        <end position="568"/>
    </location>
</feature>
<feature type="region of interest" description="Disordered" evidence="4">
    <location>
        <begin position="597"/>
        <end position="825"/>
    </location>
</feature>
<feature type="region of interest" description="Disordered" evidence="4">
    <location>
        <begin position="881"/>
        <end position="902"/>
    </location>
</feature>
<feature type="region of interest" description="Disordered" evidence="4">
    <location>
        <begin position="1210"/>
        <end position="1266"/>
    </location>
</feature>
<feature type="compositionally biased region" description="Pro residues" evidence="4">
    <location>
        <begin position="529"/>
        <end position="538"/>
    </location>
</feature>
<feature type="compositionally biased region" description="Polar residues" evidence="4">
    <location>
        <begin position="617"/>
        <end position="644"/>
    </location>
</feature>
<feature type="compositionally biased region" description="Pro residues" evidence="4">
    <location>
        <begin position="686"/>
        <end position="698"/>
    </location>
</feature>
<feature type="compositionally biased region" description="Pro residues" evidence="4">
    <location>
        <begin position="706"/>
        <end position="742"/>
    </location>
</feature>
<feature type="compositionally biased region" description="Pro residues" evidence="4">
    <location>
        <begin position="754"/>
        <end position="781"/>
    </location>
</feature>
<feature type="compositionally biased region" description="Pro residues" evidence="4">
    <location>
        <begin position="806"/>
        <end position="815"/>
    </location>
</feature>
<feature type="compositionally biased region" description="Basic and acidic residues" evidence="4">
    <location>
        <begin position="889"/>
        <end position="902"/>
    </location>
</feature>
<feature type="compositionally biased region" description="Basic and acidic residues" evidence="4">
    <location>
        <begin position="1210"/>
        <end position="1248"/>
    </location>
</feature>
<feature type="compositionally biased region" description="Basic and acidic residues" evidence="4">
    <location>
        <begin position="1255"/>
        <end position="1266"/>
    </location>
</feature>
<feature type="active site" description="Phosphocysteine intermediate" evidence="2">
    <location>
        <position position="126"/>
    </location>
</feature>
<gene>
    <name type="primary">FH13</name>
    <name type="ordered locus">At5g58160</name>
    <name type="ORF">MCK7.3</name>
</gene>
<protein>
    <recommendedName>
        <fullName>Formin-like protein 13</fullName>
        <shortName>AtFH13</shortName>
    </recommendedName>
</protein>
<dbReference type="EMBL" id="AB019228">
    <property type="protein sequence ID" value="BAA96907.1"/>
    <property type="status" value="ALT_SEQ"/>
    <property type="molecule type" value="Genomic_DNA"/>
</dbReference>
<dbReference type="EMBL" id="CP002688">
    <property type="protein sequence ID" value="AED97006.2"/>
    <property type="molecule type" value="Genomic_DNA"/>
</dbReference>
<dbReference type="RefSeq" id="NP_001318825.1">
    <property type="nucleotide sequence ID" value="NM_001345291.1"/>
</dbReference>
<dbReference type="SMR" id="Q9LVN1"/>
<dbReference type="FunCoup" id="Q9LVN1">
    <property type="interactions" value="16"/>
</dbReference>
<dbReference type="STRING" id="3702.Q9LVN1"/>
<dbReference type="GlyGen" id="Q9LVN1">
    <property type="glycosylation" value="6 sites"/>
</dbReference>
<dbReference type="iPTMnet" id="Q9LVN1"/>
<dbReference type="PaxDb" id="3702-AT5G58160.1"/>
<dbReference type="ProteomicsDB" id="230029"/>
<dbReference type="EnsemblPlants" id="AT5G58160.1">
    <property type="protein sequence ID" value="AT5G58160.1"/>
    <property type="gene ID" value="AT5G58160"/>
</dbReference>
<dbReference type="GeneID" id="835928"/>
<dbReference type="Gramene" id="AT5G58160.1">
    <property type="protein sequence ID" value="AT5G58160.1"/>
    <property type="gene ID" value="AT5G58160"/>
</dbReference>
<dbReference type="KEGG" id="ath:AT5G58160"/>
<dbReference type="Araport" id="AT5G58160"/>
<dbReference type="TAIR" id="AT5G58160">
    <property type="gene designation" value="FH13"/>
</dbReference>
<dbReference type="eggNOG" id="ENOG502QQEE">
    <property type="taxonomic scope" value="Eukaryota"/>
</dbReference>
<dbReference type="InParanoid" id="Q9LVN1"/>
<dbReference type="OMA" id="TLWHIKE"/>
<dbReference type="OrthoDB" id="1668162at2759"/>
<dbReference type="PRO" id="PR:Q9LVN1"/>
<dbReference type="Proteomes" id="UP000006548">
    <property type="component" value="Chromosome 5"/>
</dbReference>
<dbReference type="ExpressionAtlas" id="Q9LVN1">
    <property type="expression patterns" value="baseline and differential"/>
</dbReference>
<dbReference type="GO" id="GO:0004721">
    <property type="term" value="F:phosphoprotein phosphatase activity"/>
    <property type="evidence" value="ECO:0007669"/>
    <property type="project" value="UniProtKB-KW"/>
</dbReference>
<dbReference type="CDD" id="cd14497">
    <property type="entry name" value="PTP_PTEN-like"/>
    <property type="match status" value="1"/>
</dbReference>
<dbReference type="Gene3D" id="2.60.40.1110">
    <property type="match status" value="1"/>
</dbReference>
<dbReference type="Gene3D" id="1.20.58.2220">
    <property type="entry name" value="Formin, FH2 domain"/>
    <property type="match status" value="1"/>
</dbReference>
<dbReference type="Gene3D" id="3.90.190.10">
    <property type="entry name" value="Protein tyrosine phosphatase superfamily"/>
    <property type="match status" value="1"/>
</dbReference>
<dbReference type="InterPro" id="IPR035892">
    <property type="entry name" value="C2_domain_sf"/>
</dbReference>
<dbReference type="InterPro" id="IPR015425">
    <property type="entry name" value="FH2_Formin"/>
</dbReference>
<dbReference type="InterPro" id="IPR042201">
    <property type="entry name" value="FH2_Formin_sf"/>
</dbReference>
<dbReference type="InterPro" id="IPR051144">
    <property type="entry name" value="Formin_homology_domain"/>
</dbReference>
<dbReference type="InterPro" id="IPR029021">
    <property type="entry name" value="Prot-tyrosine_phosphatase-like"/>
</dbReference>
<dbReference type="InterPro" id="IPR014020">
    <property type="entry name" value="Tensin_C2-dom"/>
</dbReference>
<dbReference type="PANTHER" id="PTHR45733">
    <property type="entry name" value="FORMIN-J"/>
    <property type="match status" value="1"/>
</dbReference>
<dbReference type="PANTHER" id="PTHR45733:SF20">
    <property type="entry name" value="FORMIN-LIKE PROTEIN 13"/>
    <property type="match status" value="1"/>
</dbReference>
<dbReference type="Pfam" id="PF02181">
    <property type="entry name" value="FH2"/>
    <property type="match status" value="1"/>
</dbReference>
<dbReference type="Pfam" id="PF10409">
    <property type="entry name" value="PTEN_C2"/>
    <property type="match status" value="1"/>
</dbReference>
<dbReference type="SMART" id="SM00498">
    <property type="entry name" value="FH2"/>
    <property type="match status" value="1"/>
</dbReference>
<dbReference type="SMART" id="SM01326">
    <property type="entry name" value="PTEN_C2"/>
    <property type="match status" value="1"/>
</dbReference>
<dbReference type="SUPFAM" id="SSF52799">
    <property type="entry name" value="(Phosphotyrosine protein) phosphatases II"/>
    <property type="match status" value="1"/>
</dbReference>
<dbReference type="SUPFAM" id="SSF49562">
    <property type="entry name" value="C2 domain (Calcium/lipid-binding domain, CaLB)"/>
    <property type="match status" value="1"/>
</dbReference>
<dbReference type="SUPFAM" id="SSF101447">
    <property type="entry name" value="Formin homology 2 domain (FH2 domain)"/>
    <property type="match status" value="1"/>
</dbReference>
<dbReference type="PROSITE" id="PS51182">
    <property type="entry name" value="C2_TENSIN"/>
    <property type="match status" value="1"/>
</dbReference>
<dbReference type="PROSITE" id="PS51444">
    <property type="entry name" value="FH2"/>
    <property type="match status" value="1"/>
</dbReference>
<dbReference type="PROSITE" id="PS51181">
    <property type="entry name" value="PPASE_TENSIN"/>
    <property type="match status" value="1"/>
</dbReference>
<accession>Q9LVN1</accession>
<accession>F4KDJ5</accession>
<comment type="similarity">
    <text evidence="5">Belongs to the formin-like family. Class-II subfamily.</text>
</comment>
<comment type="sequence caution" evidence="5">
    <conflict type="erroneous gene model prediction">
        <sequence resource="EMBL-CDS" id="BAA96907"/>
    </conflict>
</comment>
<name>FH13_ARATH</name>
<reference key="1">
    <citation type="journal article" date="2000" name="DNA Res.">
        <title>Structural analysis of Arabidopsis thaliana chromosome 5. X. Sequence features of the regions of 3,076,755 bp covered by sixty P1 and TAC clones.</title>
        <authorList>
            <person name="Sato S."/>
            <person name="Nakamura Y."/>
            <person name="Kaneko T."/>
            <person name="Katoh T."/>
            <person name="Asamizu E."/>
            <person name="Kotani H."/>
            <person name="Tabata S."/>
        </authorList>
    </citation>
    <scope>NUCLEOTIDE SEQUENCE [LARGE SCALE GENOMIC DNA]</scope>
    <source>
        <strain>cv. Columbia</strain>
    </source>
</reference>
<reference key="2">
    <citation type="journal article" date="2017" name="Plant J.">
        <title>Araport11: a complete reannotation of the Arabidopsis thaliana reference genome.</title>
        <authorList>
            <person name="Cheng C.Y."/>
            <person name="Krishnakumar V."/>
            <person name="Chan A.P."/>
            <person name="Thibaud-Nissen F."/>
            <person name="Schobel S."/>
            <person name="Town C.D."/>
        </authorList>
    </citation>
    <scope>GENOME REANNOTATION</scope>
    <source>
        <strain>cv. Columbia</strain>
    </source>
</reference>
<reference key="3">
    <citation type="journal article" date="2002" name="Trends Plant Sci.">
        <title>Formins: intermediates in signal-transduction cascades that affect cytoskeletal reorganization.</title>
        <authorList>
            <person name="Deeks M.J."/>
            <person name="Hussey P.J."/>
            <person name="Davies B."/>
        </authorList>
    </citation>
    <scope>GENE FAMILY ORGANIZATION</scope>
    <scope>NOMENCLATURE</scope>
</reference>
<reference key="4">
    <citation type="journal article" date="2004" name="BMC Genomics">
        <title>Formin homology 2 domains occur in multiple contexts in angiosperms.</title>
        <authorList>
            <person name="Cvrckova F."/>
            <person name="Novotny M."/>
            <person name="Pickova D."/>
            <person name="Zarsky V."/>
        </authorList>
    </citation>
    <scope>GENE FAMILY ORGANIZATION</scope>
    <scope>NOMENCLATURE</scope>
</reference>